<dbReference type="EC" id="2.7.4.25" evidence="1"/>
<dbReference type="EMBL" id="CP000546">
    <property type="protein sequence ID" value="ABN00740.1"/>
    <property type="molecule type" value="Genomic_DNA"/>
</dbReference>
<dbReference type="RefSeq" id="WP_004189396.1">
    <property type="nucleotide sequence ID" value="NC_008836.1"/>
</dbReference>
<dbReference type="SMR" id="A2S4R9"/>
<dbReference type="GeneID" id="92978200"/>
<dbReference type="KEGG" id="bml:BMA10229_A0948"/>
<dbReference type="HOGENOM" id="CLU_079959_2_0_4"/>
<dbReference type="Proteomes" id="UP000002283">
    <property type="component" value="Chromosome I"/>
</dbReference>
<dbReference type="GO" id="GO:0005829">
    <property type="term" value="C:cytosol"/>
    <property type="evidence" value="ECO:0007669"/>
    <property type="project" value="TreeGrafter"/>
</dbReference>
<dbReference type="GO" id="GO:0005524">
    <property type="term" value="F:ATP binding"/>
    <property type="evidence" value="ECO:0007669"/>
    <property type="project" value="UniProtKB-UniRule"/>
</dbReference>
<dbReference type="GO" id="GO:0036430">
    <property type="term" value="F:CMP kinase activity"/>
    <property type="evidence" value="ECO:0007669"/>
    <property type="project" value="RHEA"/>
</dbReference>
<dbReference type="GO" id="GO:0036431">
    <property type="term" value="F:dCMP kinase activity"/>
    <property type="evidence" value="ECO:0007669"/>
    <property type="project" value="RHEA"/>
</dbReference>
<dbReference type="GO" id="GO:0015949">
    <property type="term" value="P:nucleobase-containing small molecule interconversion"/>
    <property type="evidence" value="ECO:0007669"/>
    <property type="project" value="TreeGrafter"/>
</dbReference>
<dbReference type="GO" id="GO:0006220">
    <property type="term" value="P:pyrimidine nucleotide metabolic process"/>
    <property type="evidence" value="ECO:0007669"/>
    <property type="project" value="UniProtKB-UniRule"/>
</dbReference>
<dbReference type="CDD" id="cd02020">
    <property type="entry name" value="CMPK"/>
    <property type="match status" value="1"/>
</dbReference>
<dbReference type="Gene3D" id="3.40.50.300">
    <property type="entry name" value="P-loop containing nucleotide triphosphate hydrolases"/>
    <property type="match status" value="1"/>
</dbReference>
<dbReference type="HAMAP" id="MF_00238">
    <property type="entry name" value="Cytidyl_kinase_type1"/>
    <property type="match status" value="1"/>
</dbReference>
<dbReference type="InterPro" id="IPR003136">
    <property type="entry name" value="Cytidylate_kin"/>
</dbReference>
<dbReference type="InterPro" id="IPR011994">
    <property type="entry name" value="Cytidylate_kinase_dom"/>
</dbReference>
<dbReference type="InterPro" id="IPR027417">
    <property type="entry name" value="P-loop_NTPase"/>
</dbReference>
<dbReference type="NCBIfam" id="TIGR00017">
    <property type="entry name" value="cmk"/>
    <property type="match status" value="1"/>
</dbReference>
<dbReference type="PANTHER" id="PTHR21299:SF2">
    <property type="entry name" value="CYTIDYLATE KINASE"/>
    <property type="match status" value="1"/>
</dbReference>
<dbReference type="PANTHER" id="PTHR21299">
    <property type="entry name" value="CYTIDYLATE KINASE/PANTOATE-BETA-ALANINE LIGASE"/>
    <property type="match status" value="1"/>
</dbReference>
<dbReference type="Pfam" id="PF02224">
    <property type="entry name" value="Cytidylate_kin"/>
    <property type="match status" value="1"/>
</dbReference>
<dbReference type="SUPFAM" id="SSF52540">
    <property type="entry name" value="P-loop containing nucleoside triphosphate hydrolases"/>
    <property type="match status" value="1"/>
</dbReference>
<organism>
    <name type="scientific">Burkholderia mallei (strain NCTC 10229)</name>
    <dbReference type="NCBI Taxonomy" id="412022"/>
    <lineage>
        <taxon>Bacteria</taxon>
        <taxon>Pseudomonadati</taxon>
        <taxon>Pseudomonadota</taxon>
        <taxon>Betaproteobacteria</taxon>
        <taxon>Burkholderiales</taxon>
        <taxon>Burkholderiaceae</taxon>
        <taxon>Burkholderia</taxon>
        <taxon>pseudomallei group</taxon>
    </lineage>
</organism>
<gene>
    <name evidence="1" type="primary">cmk</name>
    <name type="ordered locus">BMA10229_A0948</name>
</gene>
<name>KCY_BURM9</name>
<proteinExistence type="inferred from homology"/>
<protein>
    <recommendedName>
        <fullName evidence="1">Cytidylate kinase</fullName>
        <shortName evidence="1">CK</shortName>
        <ecNumber evidence="1">2.7.4.25</ecNumber>
    </recommendedName>
    <alternativeName>
        <fullName evidence="1">Cytidine monophosphate kinase</fullName>
        <shortName evidence="1">CMP kinase</shortName>
    </alternativeName>
</protein>
<sequence>MKSTRPFHPTPVITIDGPTASGKGTVAALVAAHLGFHLLDSGALYRLAALASIRYQVEPDDADALASLVDGLHITFREGCAQLDGVDVSDEIRAEAVGNRASAIAVHASVRAALVARQRAFRKTPGLVADGRDMGTLIFPDAVLKVFLTASVEARAARRHKQLMQKGFSANIDNLLQDLRERDARDSNRAAAPLKPAADAKPLDTSALTIEQSVEQVLAWYRELGQPA</sequence>
<comment type="catalytic activity">
    <reaction evidence="1">
        <text>CMP + ATP = CDP + ADP</text>
        <dbReference type="Rhea" id="RHEA:11600"/>
        <dbReference type="ChEBI" id="CHEBI:30616"/>
        <dbReference type="ChEBI" id="CHEBI:58069"/>
        <dbReference type="ChEBI" id="CHEBI:60377"/>
        <dbReference type="ChEBI" id="CHEBI:456216"/>
        <dbReference type="EC" id="2.7.4.25"/>
    </reaction>
</comment>
<comment type="catalytic activity">
    <reaction evidence="1">
        <text>dCMP + ATP = dCDP + ADP</text>
        <dbReference type="Rhea" id="RHEA:25094"/>
        <dbReference type="ChEBI" id="CHEBI:30616"/>
        <dbReference type="ChEBI" id="CHEBI:57566"/>
        <dbReference type="ChEBI" id="CHEBI:58593"/>
        <dbReference type="ChEBI" id="CHEBI:456216"/>
        <dbReference type="EC" id="2.7.4.25"/>
    </reaction>
</comment>
<comment type="subcellular location">
    <subcellularLocation>
        <location evidence="1">Cytoplasm</location>
    </subcellularLocation>
</comment>
<comment type="similarity">
    <text evidence="1">Belongs to the cytidylate kinase family. Type 1 subfamily.</text>
</comment>
<evidence type="ECO:0000255" key="1">
    <source>
        <dbReference type="HAMAP-Rule" id="MF_00238"/>
    </source>
</evidence>
<keyword id="KW-0067">ATP-binding</keyword>
<keyword id="KW-0963">Cytoplasm</keyword>
<keyword id="KW-0418">Kinase</keyword>
<keyword id="KW-0547">Nucleotide-binding</keyword>
<keyword id="KW-0808">Transferase</keyword>
<accession>A2S4R9</accession>
<feature type="chain" id="PRO_1000048197" description="Cytidylate kinase">
    <location>
        <begin position="1"/>
        <end position="228"/>
    </location>
</feature>
<feature type="binding site" evidence="1">
    <location>
        <begin position="17"/>
        <end position="25"/>
    </location>
    <ligand>
        <name>ATP</name>
        <dbReference type="ChEBI" id="CHEBI:30616"/>
    </ligand>
</feature>
<reference key="1">
    <citation type="journal article" date="2010" name="Genome Biol. Evol.">
        <title>Continuing evolution of Burkholderia mallei through genome reduction and large-scale rearrangements.</title>
        <authorList>
            <person name="Losada L."/>
            <person name="Ronning C.M."/>
            <person name="DeShazer D."/>
            <person name="Woods D."/>
            <person name="Fedorova N."/>
            <person name="Kim H.S."/>
            <person name="Shabalina S.A."/>
            <person name="Pearson T.R."/>
            <person name="Brinkac L."/>
            <person name="Tan P."/>
            <person name="Nandi T."/>
            <person name="Crabtree J."/>
            <person name="Badger J."/>
            <person name="Beckstrom-Sternberg S."/>
            <person name="Saqib M."/>
            <person name="Schutzer S.E."/>
            <person name="Keim P."/>
            <person name="Nierman W.C."/>
        </authorList>
    </citation>
    <scope>NUCLEOTIDE SEQUENCE [LARGE SCALE GENOMIC DNA]</scope>
    <source>
        <strain>NCTC 10229</strain>
    </source>
</reference>